<organism>
    <name type="scientific">Caldicellulosiruptor saccharolyticus (strain ATCC 43494 / DSM 8903 / Tp8T 6331)</name>
    <dbReference type="NCBI Taxonomy" id="351627"/>
    <lineage>
        <taxon>Bacteria</taxon>
        <taxon>Bacillati</taxon>
        <taxon>Bacillota</taxon>
        <taxon>Bacillota incertae sedis</taxon>
        <taxon>Caldicellulosiruptorales</taxon>
        <taxon>Caldicellulosiruptoraceae</taxon>
        <taxon>Caldicellulosiruptor</taxon>
    </lineage>
</organism>
<protein>
    <recommendedName>
        <fullName evidence="1">Large ribosomal subunit protein uL24</fullName>
    </recommendedName>
    <alternativeName>
        <fullName evidence="2">50S ribosomal protein L24</fullName>
    </alternativeName>
</protein>
<name>RL24_CALS8</name>
<gene>
    <name evidence="1" type="primary">rplX</name>
    <name type="ordered locus">Csac_2276</name>
</gene>
<keyword id="KW-0687">Ribonucleoprotein</keyword>
<keyword id="KW-0689">Ribosomal protein</keyword>
<keyword id="KW-0694">RNA-binding</keyword>
<keyword id="KW-0699">rRNA-binding</keyword>
<evidence type="ECO:0000255" key="1">
    <source>
        <dbReference type="HAMAP-Rule" id="MF_01326"/>
    </source>
</evidence>
<evidence type="ECO:0000305" key="2"/>
<feature type="chain" id="PRO_1000052199" description="Large ribosomal subunit protein uL24">
    <location>
        <begin position="1"/>
        <end position="110"/>
    </location>
</feature>
<dbReference type="EMBL" id="CP000679">
    <property type="protein sequence ID" value="ABP67854.1"/>
    <property type="molecule type" value="Genomic_DNA"/>
</dbReference>
<dbReference type="RefSeq" id="WP_011917780.1">
    <property type="nucleotide sequence ID" value="NC_009437.1"/>
</dbReference>
<dbReference type="SMR" id="A4XLR9"/>
<dbReference type="STRING" id="351627.Csac_2276"/>
<dbReference type="KEGG" id="csc:Csac_2276"/>
<dbReference type="eggNOG" id="COG0198">
    <property type="taxonomic scope" value="Bacteria"/>
</dbReference>
<dbReference type="HOGENOM" id="CLU_093315_2_0_9"/>
<dbReference type="OrthoDB" id="9807419at2"/>
<dbReference type="Proteomes" id="UP000000256">
    <property type="component" value="Chromosome"/>
</dbReference>
<dbReference type="GO" id="GO:1990904">
    <property type="term" value="C:ribonucleoprotein complex"/>
    <property type="evidence" value="ECO:0007669"/>
    <property type="project" value="UniProtKB-KW"/>
</dbReference>
<dbReference type="GO" id="GO:0005840">
    <property type="term" value="C:ribosome"/>
    <property type="evidence" value="ECO:0007669"/>
    <property type="project" value="UniProtKB-KW"/>
</dbReference>
<dbReference type="GO" id="GO:0019843">
    <property type="term" value="F:rRNA binding"/>
    <property type="evidence" value="ECO:0007669"/>
    <property type="project" value="UniProtKB-UniRule"/>
</dbReference>
<dbReference type="GO" id="GO:0003735">
    <property type="term" value="F:structural constituent of ribosome"/>
    <property type="evidence" value="ECO:0007669"/>
    <property type="project" value="InterPro"/>
</dbReference>
<dbReference type="GO" id="GO:0006412">
    <property type="term" value="P:translation"/>
    <property type="evidence" value="ECO:0007669"/>
    <property type="project" value="UniProtKB-UniRule"/>
</dbReference>
<dbReference type="CDD" id="cd06089">
    <property type="entry name" value="KOW_RPL26"/>
    <property type="match status" value="1"/>
</dbReference>
<dbReference type="FunFam" id="2.30.30.30:FF:000004">
    <property type="entry name" value="50S ribosomal protein L24"/>
    <property type="match status" value="1"/>
</dbReference>
<dbReference type="Gene3D" id="2.30.30.30">
    <property type="match status" value="1"/>
</dbReference>
<dbReference type="HAMAP" id="MF_01326_B">
    <property type="entry name" value="Ribosomal_uL24_B"/>
    <property type="match status" value="1"/>
</dbReference>
<dbReference type="InterPro" id="IPR005824">
    <property type="entry name" value="KOW"/>
</dbReference>
<dbReference type="InterPro" id="IPR014722">
    <property type="entry name" value="Rib_uL2_dom2"/>
</dbReference>
<dbReference type="InterPro" id="IPR003256">
    <property type="entry name" value="Ribosomal_uL24"/>
</dbReference>
<dbReference type="InterPro" id="IPR005825">
    <property type="entry name" value="Ribosomal_uL24_CS"/>
</dbReference>
<dbReference type="InterPro" id="IPR041988">
    <property type="entry name" value="Ribosomal_uL24_KOW"/>
</dbReference>
<dbReference type="InterPro" id="IPR008991">
    <property type="entry name" value="Translation_prot_SH3-like_sf"/>
</dbReference>
<dbReference type="NCBIfam" id="TIGR01079">
    <property type="entry name" value="rplX_bact"/>
    <property type="match status" value="1"/>
</dbReference>
<dbReference type="PANTHER" id="PTHR12903">
    <property type="entry name" value="MITOCHONDRIAL RIBOSOMAL PROTEIN L24"/>
    <property type="match status" value="1"/>
</dbReference>
<dbReference type="Pfam" id="PF00467">
    <property type="entry name" value="KOW"/>
    <property type="match status" value="1"/>
</dbReference>
<dbReference type="Pfam" id="PF17136">
    <property type="entry name" value="ribosomal_L24"/>
    <property type="match status" value="1"/>
</dbReference>
<dbReference type="SMART" id="SM00739">
    <property type="entry name" value="KOW"/>
    <property type="match status" value="1"/>
</dbReference>
<dbReference type="SUPFAM" id="SSF50104">
    <property type="entry name" value="Translation proteins SH3-like domain"/>
    <property type="match status" value="1"/>
</dbReference>
<dbReference type="PROSITE" id="PS01108">
    <property type="entry name" value="RIBOSOMAL_L24"/>
    <property type="match status" value="1"/>
</dbReference>
<comment type="function">
    <text evidence="1">One of two assembly initiator proteins, it binds directly to the 5'-end of the 23S rRNA, where it nucleates assembly of the 50S subunit.</text>
</comment>
<comment type="function">
    <text evidence="1">One of the proteins that surrounds the polypeptide exit tunnel on the outside of the subunit.</text>
</comment>
<comment type="subunit">
    <text evidence="1">Part of the 50S ribosomal subunit.</text>
</comment>
<comment type="similarity">
    <text evidence="1">Belongs to the universal ribosomal protein uL24 family.</text>
</comment>
<sequence length="110" mass="12268">MPNKVHVKKGDTVVVISGKYKGKQGKVLTVLPKDKKVVVEGVNIVKKHVRPNPKMPQGGIITQEAPIWACKVMLVCPKCNKPTRIGHRFIQEGEEEKKVRTCKKCGEIID</sequence>
<accession>A4XLR9</accession>
<reference key="1">
    <citation type="submission" date="2007-04" db="EMBL/GenBank/DDBJ databases">
        <title>Genome sequence of the thermophilic hydrogen-producing bacterium Caldicellulosiruptor saccharolyticus DSM 8903.</title>
        <authorList>
            <person name="Copeland A."/>
            <person name="Lucas S."/>
            <person name="Lapidus A."/>
            <person name="Barry K."/>
            <person name="Detter J.C."/>
            <person name="Glavina del Rio T."/>
            <person name="Hammon N."/>
            <person name="Israni S."/>
            <person name="Dalin E."/>
            <person name="Tice H."/>
            <person name="Pitluck S."/>
            <person name="Kiss H."/>
            <person name="Brettin T."/>
            <person name="Bruce D."/>
            <person name="Han C."/>
            <person name="Schmutz J."/>
            <person name="Larimer F."/>
            <person name="Land M."/>
            <person name="Hauser L."/>
            <person name="Kyrpides N."/>
            <person name="Lykidis A."/>
            <person name="van de Werken H.J.G."/>
            <person name="Verhaart M.R.A."/>
            <person name="VanFossen A.L."/>
            <person name="Lewis D.L."/>
            <person name="Nichols J.D."/>
            <person name="Goorissen H.P."/>
            <person name="van Niel E.W.J."/>
            <person name="Stams F.J.M."/>
            <person name="Willquist K.U."/>
            <person name="Ward D.E."/>
            <person name="van der Oost J."/>
            <person name="Kelly R.M."/>
            <person name="Kengen S.M.W."/>
            <person name="Richardson P."/>
        </authorList>
    </citation>
    <scope>NUCLEOTIDE SEQUENCE [LARGE SCALE GENOMIC DNA]</scope>
    <source>
        <strain>ATCC 43494 / DSM 8903 / Tp8T 6331</strain>
    </source>
</reference>
<proteinExistence type="inferred from homology"/>